<protein>
    <recommendedName>
        <fullName>Basic leucine zipper transcriptional factor ATF-like</fullName>
    </recommendedName>
    <alternativeName>
        <fullName>B-cell-activating transcription factor</fullName>
        <shortName>B-ATF</shortName>
    </alternativeName>
</protein>
<evidence type="ECO:0000250" key="1"/>
<evidence type="ECO:0000255" key="2">
    <source>
        <dbReference type="PROSITE-ProRule" id="PRU00978"/>
    </source>
</evidence>
<evidence type="ECO:0000256" key="3">
    <source>
        <dbReference type="SAM" id="MobiDB-lite"/>
    </source>
</evidence>
<evidence type="ECO:0000305" key="4"/>
<keyword id="KW-0010">Activator</keyword>
<keyword id="KW-0963">Cytoplasm</keyword>
<keyword id="KW-0221">Differentiation</keyword>
<keyword id="KW-0238">DNA-binding</keyword>
<keyword id="KW-0539">Nucleus</keyword>
<keyword id="KW-1185">Reference proteome</keyword>
<keyword id="KW-0678">Repressor</keyword>
<keyword id="KW-0804">Transcription</keyword>
<keyword id="KW-0805">Transcription regulation</keyword>
<reference key="1">
    <citation type="journal article" date="2013" name="Nature">
        <title>The zebrafish reference genome sequence and its relationship to the human genome.</title>
        <authorList>
            <person name="Howe K."/>
            <person name="Clark M.D."/>
            <person name="Torroja C.F."/>
            <person name="Torrance J."/>
            <person name="Berthelot C."/>
            <person name="Muffato M."/>
            <person name="Collins J.E."/>
            <person name="Humphray S."/>
            <person name="McLaren K."/>
            <person name="Matthews L."/>
            <person name="McLaren S."/>
            <person name="Sealy I."/>
            <person name="Caccamo M."/>
            <person name="Churcher C."/>
            <person name="Scott C."/>
            <person name="Barrett J.C."/>
            <person name="Koch R."/>
            <person name="Rauch G.J."/>
            <person name="White S."/>
            <person name="Chow W."/>
            <person name="Kilian B."/>
            <person name="Quintais L.T."/>
            <person name="Guerra-Assuncao J.A."/>
            <person name="Zhou Y."/>
            <person name="Gu Y."/>
            <person name="Yen J."/>
            <person name="Vogel J.H."/>
            <person name="Eyre T."/>
            <person name="Redmond S."/>
            <person name="Banerjee R."/>
            <person name="Chi J."/>
            <person name="Fu B."/>
            <person name="Langley E."/>
            <person name="Maguire S.F."/>
            <person name="Laird G.K."/>
            <person name="Lloyd D."/>
            <person name="Kenyon E."/>
            <person name="Donaldson S."/>
            <person name="Sehra H."/>
            <person name="Almeida-King J."/>
            <person name="Loveland J."/>
            <person name="Trevanion S."/>
            <person name="Jones M."/>
            <person name="Quail M."/>
            <person name="Willey D."/>
            <person name="Hunt A."/>
            <person name="Burton J."/>
            <person name="Sims S."/>
            <person name="McLay K."/>
            <person name="Plumb B."/>
            <person name="Davis J."/>
            <person name="Clee C."/>
            <person name="Oliver K."/>
            <person name="Clark R."/>
            <person name="Riddle C."/>
            <person name="Elliot D."/>
            <person name="Threadgold G."/>
            <person name="Harden G."/>
            <person name="Ware D."/>
            <person name="Begum S."/>
            <person name="Mortimore B."/>
            <person name="Kerry G."/>
            <person name="Heath P."/>
            <person name="Phillimore B."/>
            <person name="Tracey A."/>
            <person name="Corby N."/>
            <person name="Dunn M."/>
            <person name="Johnson C."/>
            <person name="Wood J."/>
            <person name="Clark S."/>
            <person name="Pelan S."/>
            <person name="Griffiths G."/>
            <person name="Smith M."/>
            <person name="Glithero R."/>
            <person name="Howden P."/>
            <person name="Barker N."/>
            <person name="Lloyd C."/>
            <person name="Stevens C."/>
            <person name="Harley J."/>
            <person name="Holt K."/>
            <person name="Panagiotidis G."/>
            <person name="Lovell J."/>
            <person name="Beasley H."/>
            <person name="Henderson C."/>
            <person name="Gordon D."/>
            <person name="Auger K."/>
            <person name="Wright D."/>
            <person name="Collins J."/>
            <person name="Raisen C."/>
            <person name="Dyer L."/>
            <person name="Leung K."/>
            <person name="Robertson L."/>
            <person name="Ambridge K."/>
            <person name="Leongamornlert D."/>
            <person name="McGuire S."/>
            <person name="Gilderthorp R."/>
            <person name="Griffiths C."/>
            <person name="Manthravadi D."/>
            <person name="Nichol S."/>
            <person name="Barker G."/>
            <person name="Whitehead S."/>
            <person name="Kay M."/>
            <person name="Brown J."/>
            <person name="Murnane C."/>
            <person name="Gray E."/>
            <person name="Humphries M."/>
            <person name="Sycamore N."/>
            <person name="Barker D."/>
            <person name="Saunders D."/>
            <person name="Wallis J."/>
            <person name="Babbage A."/>
            <person name="Hammond S."/>
            <person name="Mashreghi-Mohammadi M."/>
            <person name="Barr L."/>
            <person name="Martin S."/>
            <person name="Wray P."/>
            <person name="Ellington A."/>
            <person name="Matthews N."/>
            <person name="Ellwood M."/>
            <person name="Woodmansey R."/>
            <person name="Clark G."/>
            <person name="Cooper J."/>
            <person name="Tromans A."/>
            <person name="Grafham D."/>
            <person name="Skuce C."/>
            <person name="Pandian R."/>
            <person name="Andrews R."/>
            <person name="Harrison E."/>
            <person name="Kimberley A."/>
            <person name="Garnett J."/>
            <person name="Fosker N."/>
            <person name="Hall R."/>
            <person name="Garner P."/>
            <person name="Kelly D."/>
            <person name="Bird C."/>
            <person name="Palmer S."/>
            <person name="Gehring I."/>
            <person name="Berger A."/>
            <person name="Dooley C.M."/>
            <person name="Ersan-Urun Z."/>
            <person name="Eser C."/>
            <person name="Geiger H."/>
            <person name="Geisler M."/>
            <person name="Karotki L."/>
            <person name="Kirn A."/>
            <person name="Konantz J."/>
            <person name="Konantz M."/>
            <person name="Oberlander M."/>
            <person name="Rudolph-Geiger S."/>
            <person name="Teucke M."/>
            <person name="Lanz C."/>
            <person name="Raddatz G."/>
            <person name="Osoegawa K."/>
            <person name="Zhu B."/>
            <person name="Rapp A."/>
            <person name="Widaa S."/>
            <person name="Langford C."/>
            <person name="Yang F."/>
            <person name="Schuster S.C."/>
            <person name="Carter N.P."/>
            <person name="Harrow J."/>
            <person name="Ning Z."/>
            <person name="Herrero J."/>
            <person name="Searle S.M."/>
            <person name="Enright A."/>
            <person name="Geisler R."/>
            <person name="Plasterk R.H."/>
            <person name="Lee C."/>
            <person name="Westerfield M."/>
            <person name="de Jong P.J."/>
            <person name="Zon L.I."/>
            <person name="Postlethwait J.H."/>
            <person name="Nusslein-Volhard C."/>
            <person name="Hubbard T.J."/>
            <person name="Roest Crollius H."/>
            <person name="Rogers J."/>
            <person name="Stemple D.L."/>
        </authorList>
    </citation>
    <scope>NUCLEOTIDE SEQUENCE [LARGE SCALE GENOMIC DNA]</scope>
    <source>
        <strain>Tuebingen</strain>
    </source>
</reference>
<dbReference type="EMBL" id="AL929435">
    <property type="status" value="NOT_ANNOTATED_CDS"/>
    <property type="molecule type" value="Genomic_DNA"/>
</dbReference>
<dbReference type="RefSeq" id="XP_005160917.1">
    <property type="nucleotide sequence ID" value="XM_005160860.5"/>
</dbReference>
<dbReference type="SMR" id="F1QW76"/>
<dbReference type="FunCoup" id="F1QW76">
    <property type="interactions" value="140"/>
</dbReference>
<dbReference type="STRING" id="7955.ENSDARP00000014497"/>
<dbReference type="PaxDb" id="7955-ENSDARP00000014497"/>
<dbReference type="Ensembl" id="ENSDART00000005548">
    <property type="protein sequence ID" value="ENSDARP00000014497"/>
    <property type="gene ID" value="ENSDARG00000011818"/>
</dbReference>
<dbReference type="GeneID" id="564589"/>
<dbReference type="AGR" id="ZFIN:ZDB-GENE-041014-291"/>
<dbReference type="CTD" id="10538"/>
<dbReference type="ZFIN" id="ZDB-GENE-041014-291">
    <property type="gene designation" value="batf"/>
</dbReference>
<dbReference type="eggNOG" id="KOG1414">
    <property type="taxonomic scope" value="Eukaryota"/>
</dbReference>
<dbReference type="InParanoid" id="F1QW76"/>
<dbReference type="OMA" id="NSHETHC"/>
<dbReference type="PhylomeDB" id="F1QW76"/>
<dbReference type="TreeFam" id="TF332340"/>
<dbReference type="PRO" id="PR:F1QW76"/>
<dbReference type="Proteomes" id="UP000000437">
    <property type="component" value="Chromosome 20"/>
</dbReference>
<dbReference type="Bgee" id="ENSDARG00000011818">
    <property type="expression patterns" value="Expressed in early embryo and 15 other cell types or tissues"/>
</dbReference>
<dbReference type="GO" id="GO:0005737">
    <property type="term" value="C:cytoplasm"/>
    <property type="evidence" value="ECO:0000250"/>
    <property type="project" value="UniProtKB"/>
</dbReference>
<dbReference type="GO" id="GO:0005634">
    <property type="term" value="C:nucleus"/>
    <property type="evidence" value="ECO:0000250"/>
    <property type="project" value="UniProtKB"/>
</dbReference>
<dbReference type="GO" id="GO:0003700">
    <property type="term" value="F:DNA-binding transcription factor activity"/>
    <property type="evidence" value="ECO:0000250"/>
    <property type="project" value="UniProtKB"/>
</dbReference>
<dbReference type="GO" id="GO:0000981">
    <property type="term" value="F:DNA-binding transcription factor activity, RNA polymerase II-specific"/>
    <property type="evidence" value="ECO:0000318"/>
    <property type="project" value="GO_Central"/>
</dbReference>
<dbReference type="GO" id="GO:0000978">
    <property type="term" value="F:RNA polymerase II cis-regulatory region sequence-specific DNA binding"/>
    <property type="evidence" value="ECO:0000318"/>
    <property type="project" value="GO_Central"/>
</dbReference>
<dbReference type="GO" id="GO:0043565">
    <property type="term" value="F:sequence-specific DNA binding"/>
    <property type="evidence" value="ECO:0000250"/>
    <property type="project" value="UniProtKB"/>
</dbReference>
<dbReference type="GO" id="GO:0042832">
    <property type="term" value="P:defense response to protozoan"/>
    <property type="evidence" value="ECO:0000250"/>
    <property type="project" value="UniProtKB"/>
</dbReference>
<dbReference type="GO" id="GO:0006974">
    <property type="term" value="P:DNA damage response"/>
    <property type="evidence" value="ECO:0000250"/>
    <property type="project" value="UniProtKB"/>
</dbReference>
<dbReference type="GO" id="GO:0030330">
    <property type="term" value="P:DNA damage response, signal transduction by p53 class mediator"/>
    <property type="evidence" value="ECO:0000250"/>
    <property type="project" value="UniProtKB"/>
</dbReference>
<dbReference type="GO" id="GO:0060218">
    <property type="term" value="P:hematopoietic stem cell differentiation"/>
    <property type="evidence" value="ECO:0000250"/>
    <property type="project" value="UniProtKB"/>
</dbReference>
<dbReference type="GO" id="GO:0045190">
    <property type="term" value="P:isotype switching"/>
    <property type="evidence" value="ECO:0000250"/>
    <property type="project" value="UniProtKB"/>
</dbReference>
<dbReference type="GO" id="GO:0002320">
    <property type="term" value="P:lymphoid progenitor cell differentiation"/>
    <property type="evidence" value="ECO:0000250"/>
    <property type="project" value="UniProtKB"/>
</dbReference>
<dbReference type="GO" id="GO:0043011">
    <property type="term" value="P:myeloid dendritic cell differentiation"/>
    <property type="evidence" value="ECO:0000250"/>
    <property type="project" value="UniProtKB"/>
</dbReference>
<dbReference type="GO" id="GO:0001819">
    <property type="term" value="P:positive regulation of cytokine production"/>
    <property type="evidence" value="ECO:0000250"/>
    <property type="project" value="UniProtKB"/>
</dbReference>
<dbReference type="GO" id="GO:0006357">
    <property type="term" value="P:regulation of transcription by RNA polymerase II"/>
    <property type="evidence" value="ECO:0000318"/>
    <property type="project" value="GO_Central"/>
</dbReference>
<dbReference type="GO" id="GO:0072539">
    <property type="term" value="P:T-helper 17 cell differentiation"/>
    <property type="evidence" value="ECO:0000250"/>
    <property type="project" value="UniProtKB"/>
</dbReference>
<dbReference type="GO" id="GO:0072540">
    <property type="term" value="P:T-helper 17 cell lineage commitment"/>
    <property type="evidence" value="ECO:0000250"/>
    <property type="project" value="UniProtKB"/>
</dbReference>
<dbReference type="GO" id="GO:0045064">
    <property type="term" value="P:T-helper 2 cell differentiation"/>
    <property type="evidence" value="ECO:0000250"/>
    <property type="project" value="UniProtKB"/>
</dbReference>
<dbReference type="CDD" id="cd14701">
    <property type="entry name" value="bZIP_BATF"/>
    <property type="match status" value="1"/>
</dbReference>
<dbReference type="FunFam" id="1.20.5.170:FF:000043">
    <property type="entry name" value="Basic leucine zipper transcriptional factor ATF-like"/>
    <property type="match status" value="1"/>
</dbReference>
<dbReference type="Gene3D" id="1.20.5.170">
    <property type="match status" value="1"/>
</dbReference>
<dbReference type="InterPro" id="IPR000837">
    <property type="entry name" value="AP-1"/>
</dbReference>
<dbReference type="InterPro" id="IPR004827">
    <property type="entry name" value="bZIP"/>
</dbReference>
<dbReference type="InterPro" id="IPR046347">
    <property type="entry name" value="bZIP_sf"/>
</dbReference>
<dbReference type="PANTHER" id="PTHR23351:SF14">
    <property type="entry name" value="BASIC LEUCINE ZIPPER TRANSCRIPTIONAL FACTOR ATF-LIKE"/>
    <property type="match status" value="1"/>
</dbReference>
<dbReference type="PANTHER" id="PTHR23351">
    <property type="entry name" value="FOS TRANSCRIPTION FACTOR-RELATED"/>
    <property type="match status" value="1"/>
</dbReference>
<dbReference type="Pfam" id="PF00170">
    <property type="entry name" value="bZIP_1"/>
    <property type="match status" value="1"/>
</dbReference>
<dbReference type="PRINTS" id="PR00042">
    <property type="entry name" value="LEUZIPPRFOS"/>
</dbReference>
<dbReference type="SMART" id="SM00338">
    <property type="entry name" value="BRLZ"/>
    <property type="match status" value="1"/>
</dbReference>
<dbReference type="SUPFAM" id="SSF57959">
    <property type="entry name" value="Leucine zipper domain"/>
    <property type="match status" value="1"/>
</dbReference>
<dbReference type="PROSITE" id="PS50217">
    <property type="entry name" value="BZIP"/>
    <property type="match status" value="1"/>
</dbReference>
<dbReference type="PROSITE" id="PS00036">
    <property type="entry name" value="BZIP_BASIC"/>
    <property type="match status" value="1"/>
</dbReference>
<feature type="chain" id="PRO_0000420465" description="Basic leucine zipper transcriptional factor ATF-like">
    <location>
        <begin position="1"/>
        <end position="124"/>
    </location>
</feature>
<feature type="domain" description="bZIP" evidence="2">
    <location>
        <begin position="27"/>
        <end position="90"/>
    </location>
</feature>
<feature type="region of interest" description="Disordered" evidence="3">
    <location>
        <begin position="1"/>
        <end position="60"/>
    </location>
</feature>
<feature type="region of interest" description="Basic motif">
    <location>
        <begin position="29"/>
        <end position="51"/>
    </location>
</feature>
<feature type="region of interest" description="Leucine-zipper">
    <location>
        <begin position="55"/>
        <end position="83"/>
    </location>
</feature>
<feature type="compositionally biased region" description="Polar residues" evidence="3">
    <location>
        <begin position="1"/>
        <end position="23"/>
    </location>
</feature>
<proteinExistence type="inferred from homology"/>
<comment type="function">
    <text evidence="1">AP-1 family transcription factor that controls the differentiation of lineage-specific cells in the immune system: specifically mediates the differentiation of T-helper 17 cells (Th17), follicular T-helper cells (TfH), CD8(+) dendritic cells and class-switch recombination (CSR) in B-cells.</text>
</comment>
<comment type="subcellular location">
    <subcellularLocation>
        <location evidence="2">Nucleus</location>
    </subcellularLocation>
    <subcellularLocation>
        <location evidence="1">Cytoplasm</location>
    </subcellularLocation>
    <text evidence="1">Present in the nucleus and cytoplasm, but shows increased nuclear translocation after activation of T-cells.</text>
</comment>
<comment type="similarity">
    <text evidence="4">Belongs to the bZIP family.</text>
</comment>
<accession>F1QW76</accession>
<organism>
    <name type="scientific">Danio rerio</name>
    <name type="common">Zebrafish</name>
    <name type="synonym">Brachydanio rerio</name>
    <dbReference type="NCBI Taxonomy" id="7955"/>
    <lineage>
        <taxon>Eukaryota</taxon>
        <taxon>Metazoa</taxon>
        <taxon>Chordata</taxon>
        <taxon>Craniata</taxon>
        <taxon>Vertebrata</taxon>
        <taxon>Euteleostomi</taxon>
        <taxon>Actinopterygii</taxon>
        <taxon>Neopterygii</taxon>
        <taxon>Teleostei</taxon>
        <taxon>Ostariophysi</taxon>
        <taxon>Cypriniformes</taxon>
        <taxon>Danionidae</taxon>
        <taxon>Danioninae</taxon>
        <taxon>Danio</taxon>
    </lineage>
</organism>
<name>BATF_DANRE</name>
<gene>
    <name type="primary">batf</name>
</gene>
<sequence>MAQGSDNNDTSYTKSPSPGNKQGSSDDMRKVMRREKNRIAAQKSRMRQTQKADSLHLESESLEKENAALRKEVKRLTEEAKYLSTVLSNHEPLCTGLSGASPELLYGAHHGAFHQHISVPHYPL</sequence>